<protein>
    <recommendedName>
        <fullName evidence="1">Large ribosomal subunit protein bL17</fullName>
    </recommendedName>
    <alternativeName>
        <fullName evidence="2">50S ribosomal protein L17</fullName>
    </alternativeName>
</protein>
<evidence type="ECO:0000255" key="1">
    <source>
        <dbReference type="HAMAP-Rule" id="MF_01368"/>
    </source>
</evidence>
<evidence type="ECO:0000305" key="2"/>
<name>RL17_EHRRG</name>
<dbReference type="EMBL" id="CR925677">
    <property type="protein sequence ID" value="CAI28057.1"/>
    <property type="molecule type" value="Genomic_DNA"/>
</dbReference>
<dbReference type="RefSeq" id="WP_011155265.1">
    <property type="nucleotide sequence ID" value="NC_006831.1"/>
</dbReference>
<dbReference type="SMR" id="Q5FFS2"/>
<dbReference type="GeneID" id="33057641"/>
<dbReference type="KEGG" id="erg:ERGA_CDS_06050"/>
<dbReference type="HOGENOM" id="CLU_074407_2_0_5"/>
<dbReference type="OrthoDB" id="9809073at2"/>
<dbReference type="Proteomes" id="UP000000533">
    <property type="component" value="Chromosome"/>
</dbReference>
<dbReference type="GO" id="GO:0022625">
    <property type="term" value="C:cytosolic large ribosomal subunit"/>
    <property type="evidence" value="ECO:0007669"/>
    <property type="project" value="TreeGrafter"/>
</dbReference>
<dbReference type="GO" id="GO:0003735">
    <property type="term" value="F:structural constituent of ribosome"/>
    <property type="evidence" value="ECO:0007669"/>
    <property type="project" value="InterPro"/>
</dbReference>
<dbReference type="GO" id="GO:0006412">
    <property type="term" value="P:translation"/>
    <property type="evidence" value="ECO:0007669"/>
    <property type="project" value="UniProtKB-UniRule"/>
</dbReference>
<dbReference type="Gene3D" id="3.90.1030.10">
    <property type="entry name" value="Ribosomal protein L17"/>
    <property type="match status" value="1"/>
</dbReference>
<dbReference type="HAMAP" id="MF_01368">
    <property type="entry name" value="Ribosomal_bL17"/>
    <property type="match status" value="1"/>
</dbReference>
<dbReference type="InterPro" id="IPR000456">
    <property type="entry name" value="Ribosomal_bL17"/>
</dbReference>
<dbReference type="InterPro" id="IPR047859">
    <property type="entry name" value="Ribosomal_bL17_CS"/>
</dbReference>
<dbReference type="InterPro" id="IPR036373">
    <property type="entry name" value="Ribosomal_bL17_sf"/>
</dbReference>
<dbReference type="NCBIfam" id="TIGR00059">
    <property type="entry name" value="L17"/>
    <property type="match status" value="1"/>
</dbReference>
<dbReference type="PANTHER" id="PTHR14413:SF16">
    <property type="entry name" value="LARGE RIBOSOMAL SUBUNIT PROTEIN BL17M"/>
    <property type="match status" value="1"/>
</dbReference>
<dbReference type="PANTHER" id="PTHR14413">
    <property type="entry name" value="RIBOSOMAL PROTEIN L17"/>
    <property type="match status" value="1"/>
</dbReference>
<dbReference type="Pfam" id="PF01196">
    <property type="entry name" value="Ribosomal_L17"/>
    <property type="match status" value="1"/>
</dbReference>
<dbReference type="SUPFAM" id="SSF64263">
    <property type="entry name" value="Prokaryotic ribosomal protein L17"/>
    <property type="match status" value="1"/>
</dbReference>
<dbReference type="PROSITE" id="PS01167">
    <property type="entry name" value="RIBOSOMAL_L17"/>
    <property type="match status" value="1"/>
</dbReference>
<reference key="1">
    <citation type="journal article" date="2006" name="J. Bacteriol.">
        <title>Comparative genomic analysis of three strains of Ehrlichia ruminantium reveals an active process of genome size plasticity.</title>
        <authorList>
            <person name="Frutos R."/>
            <person name="Viari A."/>
            <person name="Ferraz C."/>
            <person name="Morgat A."/>
            <person name="Eychenie S."/>
            <person name="Kandassamy Y."/>
            <person name="Chantal I."/>
            <person name="Bensaid A."/>
            <person name="Coissac E."/>
            <person name="Vachiery N."/>
            <person name="Demaille J."/>
            <person name="Martinez D."/>
        </authorList>
    </citation>
    <scope>NUCLEOTIDE SEQUENCE [LARGE SCALE GENOMIC DNA]</scope>
    <source>
        <strain>Gardel</strain>
    </source>
</reference>
<gene>
    <name evidence="1" type="primary">rplQ</name>
    <name type="ordered locus">ERGA_CDS_06050</name>
</gene>
<accession>Q5FFS2</accession>
<comment type="subunit">
    <text evidence="1">Part of the 50S ribosomal subunit. Contacts protein L32.</text>
</comment>
<comment type="similarity">
    <text evidence="1">Belongs to the bacterial ribosomal protein bL17 family.</text>
</comment>
<feature type="chain" id="PRO_1000055820" description="Large ribosomal subunit protein bL17">
    <location>
        <begin position="1"/>
        <end position="128"/>
    </location>
</feature>
<proteinExistence type="inferred from homology"/>
<sequence length="128" mass="14803">MRHRVAHRKFSRTSAHRISMLLNLSISLIKHERITTTLPKAKELRPYVEKLITIGKVYREKNLVYGKRLLISKLKNIDATDKLIDVLSVRYKSRNGGYTRIMKNGFRKGDCAPIAIIELVDRQIVSQS</sequence>
<organism>
    <name type="scientific">Ehrlichia ruminantium (strain Gardel)</name>
    <dbReference type="NCBI Taxonomy" id="302409"/>
    <lineage>
        <taxon>Bacteria</taxon>
        <taxon>Pseudomonadati</taxon>
        <taxon>Pseudomonadota</taxon>
        <taxon>Alphaproteobacteria</taxon>
        <taxon>Rickettsiales</taxon>
        <taxon>Anaplasmataceae</taxon>
        <taxon>Ehrlichia</taxon>
    </lineage>
</organism>
<keyword id="KW-0687">Ribonucleoprotein</keyword>
<keyword id="KW-0689">Ribosomal protein</keyword>